<accession>P01687</accession>
<proteinExistence type="evidence at protein level"/>
<sequence length="108" mass="11281">DVVMTQTPASVSEPVGGTVTIKCQASQSIYSNLAWYQZKPGQPPKLLIYKASTLESGVPSRFKGSGSGTDFTLTISDLECADAATYFCQGSBYTGTVFGGGTEVVVKG</sequence>
<organism>
    <name type="scientific">Oryctolagus cuniculus</name>
    <name type="common">Rabbit</name>
    <dbReference type="NCBI Taxonomy" id="9986"/>
    <lineage>
        <taxon>Eukaryota</taxon>
        <taxon>Metazoa</taxon>
        <taxon>Chordata</taxon>
        <taxon>Craniata</taxon>
        <taxon>Vertebrata</taxon>
        <taxon>Euteleostomi</taxon>
        <taxon>Mammalia</taxon>
        <taxon>Eutheria</taxon>
        <taxon>Euarchontoglires</taxon>
        <taxon>Glires</taxon>
        <taxon>Lagomorpha</taxon>
        <taxon>Leporidae</taxon>
        <taxon>Oryctolagus</taxon>
    </lineage>
</organism>
<evidence type="ECO:0000255" key="1">
    <source>
        <dbReference type="PROSITE-ProRule" id="PRU00114"/>
    </source>
</evidence>
<evidence type="ECO:0000269" key="2">
    <source>
    </source>
</evidence>
<protein>
    <recommendedName>
        <fullName>Ig kappa chain V region BS-5</fullName>
    </recommendedName>
</protein>
<dbReference type="PIR" id="A90274">
    <property type="entry name" value="KVRBB5"/>
</dbReference>
<dbReference type="FunCoup" id="P01687">
    <property type="interactions" value="277"/>
</dbReference>
<dbReference type="STRING" id="9986.ENSOCUP00000018217"/>
<dbReference type="InParanoid" id="P01687"/>
<dbReference type="Proteomes" id="UP000001811">
    <property type="component" value="Unplaced"/>
</dbReference>
<dbReference type="GO" id="GO:0019814">
    <property type="term" value="C:immunoglobulin complex"/>
    <property type="evidence" value="ECO:0007669"/>
    <property type="project" value="UniProtKB-KW"/>
</dbReference>
<dbReference type="GO" id="GO:0002250">
    <property type="term" value="P:adaptive immune response"/>
    <property type="evidence" value="ECO:0007669"/>
    <property type="project" value="UniProtKB-KW"/>
</dbReference>
<dbReference type="FunFam" id="2.60.40.10:FF:000350">
    <property type="entry name" value="Immunoglobulin kappa chain variable 18-36"/>
    <property type="match status" value="1"/>
</dbReference>
<dbReference type="Gene3D" id="2.60.40.10">
    <property type="entry name" value="Immunoglobulins"/>
    <property type="match status" value="1"/>
</dbReference>
<dbReference type="InterPro" id="IPR007110">
    <property type="entry name" value="Ig-like_dom"/>
</dbReference>
<dbReference type="InterPro" id="IPR036179">
    <property type="entry name" value="Ig-like_dom_sf"/>
</dbReference>
<dbReference type="InterPro" id="IPR013783">
    <property type="entry name" value="Ig-like_fold"/>
</dbReference>
<dbReference type="InterPro" id="IPR003599">
    <property type="entry name" value="Ig_sub"/>
</dbReference>
<dbReference type="InterPro" id="IPR003598">
    <property type="entry name" value="Ig_sub2"/>
</dbReference>
<dbReference type="InterPro" id="IPR013106">
    <property type="entry name" value="Ig_V-set"/>
</dbReference>
<dbReference type="InterPro" id="IPR050150">
    <property type="entry name" value="IgV_Light_Chain"/>
</dbReference>
<dbReference type="PANTHER" id="PTHR23267">
    <property type="entry name" value="IMMUNOGLOBULIN LIGHT CHAIN"/>
    <property type="match status" value="1"/>
</dbReference>
<dbReference type="Pfam" id="PF07686">
    <property type="entry name" value="V-set"/>
    <property type="match status" value="1"/>
</dbReference>
<dbReference type="SMART" id="SM00409">
    <property type="entry name" value="IG"/>
    <property type="match status" value="1"/>
</dbReference>
<dbReference type="SMART" id="SM00408">
    <property type="entry name" value="IGc2"/>
    <property type="match status" value="1"/>
</dbReference>
<dbReference type="SMART" id="SM00406">
    <property type="entry name" value="IGv"/>
    <property type="match status" value="1"/>
</dbReference>
<dbReference type="SUPFAM" id="SSF48726">
    <property type="entry name" value="Immunoglobulin"/>
    <property type="match status" value="1"/>
</dbReference>
<dbReference type="PROSITE" id="PS50835">
    <property type="entry name" value="IG_LIKE"/>
    <property type="match status" value="1"/>
</dbReference>
<reference key="1">
    <citation type="journal article" date="1974" name="Biochem. J.">
        <title>Comparison of the amino acid sequences of the variable regions of light chains derived from two homogeneous rabbit anti-pneumococcal antibodies.</title>
        <authorList>
            <person name="Jaton J.-C."/>
        </authorList>
    </citation>
    <scope>PROTEIN SEQUENCE</scope>
</reference>
<reference key="2">
    <citation type="submission" date="1975-06" db="PIR data bank">
        <authorList>
            <person name="Jaton J.-C."/>
        </authorList>
    </citation>
    <scope>AMIDE ASSIGNMENTS FOR 37 AND 89</scope>
</reference>
<feature type="chain" id="PRO_0000059725" description="Ig kappa chain V region BS-5">
    <location>
        <begin position="1"/>
        <end position="108" status="greater than"/>
    </location>
</feature>
<feature type="region of interest" description="Framework-1">
    <location>
        <begin position="1"/>
        <end position="23"/>
    </location>
</feature>
<feature type="region of interest" description="Complementarity-determining-1">
    <location>
        <begin position="24"/>
        <end position="34"/>
    </location>
</feature>
<feature type="region of interest" description="Framework-2">
    <location>
        <begin position="35"/>
        <end position="49"/>
    </location>
</feature>
<feature type="region of interest" description="Complementarity-determining-2">
    <location>
        <begin position="50"/>
        <end position="56"/>
    </location>
</feature>
<feature type="region of interest" description="Framework-3">
    <location>
        <begin position="57"/>
        <end position="88"/>
    </location>
</feature>
<feature type="region of interest" description="Complementarity-determining-3">
    <location>
        <begin position="89"/>
        <end position="97"/>
    </location>
</feature>
<feature type="region of interest" description="Framework-4">
    <location>
        <begin position="98"/>
        <end position="107"/>
    </location>
</feature>
<feature type="disulfide bond" evidence="1 2">
    <location>
        <begin position="23"/>
        <end position="88"/>
    </location>
</feature>
<feature type="disulfide bond" description="With C region">
    <location>
        <begin position="80"/>
        <end position="108" status="greater than"/>
    </location>
</feature>
<feature type="non-terminal residue">
    <location>
        <position position="108"/>
    </location>
</feature>
<comment type="miscellaneous">
    <text>This chain differs from the kappa chain from rabbit BS-1, also obtained from antibody to type III pneumococci, at 8 positions in the V region.</text>
</comment>
<name>KV06_RABIT</name>
<keyword id="KW-1064">Adaptive immunity</keyword>
<keyword id="KW-0903">Direct protein sequencing</keyword>
<keyword id="KW-1015">Disulfide bond</keyword>
<keyword id="KW-0391">Immunity</keyword>
<keyword id="KW-1280">Immunoglobulin</keyword>
<keyword id="KW-1185">Reference proteome</keyword>